<dbReference type="EC" id="3.1.-.-" evidence="1"/>
<dbReference type="EMBL" id="CP000880">
    <property type="protein sequence ID" value="ABX24321.1"/>
    <property type="molecule type" value="Genomic_DNA"/>
</dbReference>
<dbReference type="SMR" id="A9MQS7"/>
<dbReference type="STRING" id="41514.SARI_04548"/>
<dbReference type="KEGG" id="ses:SARI_04548"/>
<dbReference type="HOGENOM" id="CLU_098240_3_0_6"/>
<dbReference type="Proteomes" id="UP000002084">
    <property type="component" value="Chromosome"/>
</dbReference>
<dbReference type="GO" id="GO:0005829">
    <property type="term" value="C:cytosol"/>
    <property type="evidence" value="ECO:0007669"/>
    <property type="project" value="TreeGrafter"/>
</dbReference>
<dbReference type="GO" id="GO:0004518">
    <property type="term" value="F:nuclease activity"/>
    <property type="evidence" value="ECO:0007669"/>
    <property type="project" value="UniProtKB-KW"/>
</dbReference>
<dbReference type="GO" id="GO:0000967">
    <property type="term" value="P:rRNA 5'-end processing"/>
    <property type="evidence" value="ECO:0007669"/>
    <property type="project" value="UniProtKB-UniRule"/>
</dbReference>
<dbReference type="CDD" id="cd16964">
    <property type="entry name" value="YqgF"/>
    <property type="match status" value="1"/>
</dbReference>
<dbReference type="FunFam" id="3.30.420.140:FF:000002">
    <property type="entry name" value="Putative pre-16S rRNA nuclease"/>
    <property type="match status" value="1"/>
</dbReference>
<dbReference type="Gene3D" id="3.30.420.140">
    <property type="entry name" value="YqgF/RNase H-like domain"/>
    <property type="match status" value="1"/>
</dbReference>
<dbReference type="HAMAP" id="MF_00651">
    <property type="entry name" value="Nuclease_YqgF"/>
    <property type="match status" value="1"/>
</dbReference>
<dbReference type="InterPro" id="IPR012337">
    <property type="entry name" value="RNaseH-like_sf"/>
</dbReference>
<dbReference type="InterPro" id="IPR005227">
    <property type="entry name" value="YqgF"/>
</dbReference>
<dbReference type="InterPro" id="IPR006641">
    <property type="entry name" value="YqgF/RNaseH-like_dom"/>
</dbReference>
<dbReference type="InterPro" id="IPR037027">
    <property type="entry name" value="YqgF/RNaseH-like_dom_sf"/>
</dbReference>
<dbReference type="NCBIfam" id="TIGR00250">
    <property type="entry name" value="RNAse_H_YqgF"/>
    <property type="match status" value="1"/>
</dbReference>
<dbReference type="PANTHER" id="PTHR33317">
    <property type="entry name" value="POLYNUCLEOTIDYL TRANSFERASE, RIBONUCLEASE H-LIKE SUPERFAMILY PROTEIN"/>
    <property type="match status" value="1"/>
</dbReference>
<dbReference type="PANTHER" id="PTHR33317:SF4">
    <property type="entry name" value="POLYNUCLEOTIDYL TRANSFERASE, RIBONUCLEASE H-LIKE SUPERFAMILY PROTEIN"/>
    <property type="match status" value="1"/>
</dbReference>
<dbReference type="Pfam" id="PF03652">
    <property type="entry name" value="RuvX"/>
    <property type="match status" value="1"/>
</dbReference>
<dbReference type="SMART" id="SM00732">
    <property type="entry name" value="YqgFc"/>
    <property type="match status" value="1"/>
</dbReference>
<dbReference type="SUPFAM" id="SSF53098">
    <property type="entry name" value="Ribonuclease H-like"/>
    <property type="match status" value="1"/>
</dbReference>
<keyword id="KW-0963">Cytoplasm</keyword>
<keyword id="KW-0378">Hydrolase</keyword>
<keyword id="KW-0540">Nuclease</keyword>
<keyword id="KW-1185">Reference proteome</keyword>
<keyword id="KW-0690">Ribosome biogenesis</keyword>
<reference key="1">
    <citation type="submission" date="2007-11" db="EMBL/GenBank/DDBJ databases">
        <authorList>
            <consortium name="The Salmonella enterica serovar Arizonae Genome Sequencing Project"/>
            <person name="McClelland M."/>
            <person name="Sanderson E.K."/>
            <person name="Porwollik S."/>
            <person name="Spieth J."/>
            <person name="Clifton W.S."/>
            <person name="Fulton R."/>
            <person name="Chunyan W."/>
            <person name="Wollam A."/>
            <person name="Shah N."/>
            <person name="Pepin K."/>
            <person name="Bhonagiri V."/>
            <person name="Nash W."/>
            <person name="Johnson M."/>
            <person name="Thiruvilangam P."/>
            <person name="Wilson R."/>
        </authorList>
    </citation>
    <scope>NUCLEOTIDE SEQUENCE [LARGE SCALE GENOMIC DNA]</scope>
    <source>
        <strain>ATCC BAA-731 / CDC346-86 / RSK2980</strain>
    </source>
</reference>
<sequence length="138" mass="15132">MSGTLLAFDFGTKSIGVAIGQRITGTARPLPAIKAQDGTPDWTLIERLLKEWQPDEIIVGLPLNMDGTEQPLTARARKFANRIHGRFGVTVTLHDERLSTVEARSGLFEQGGYRALNKGKVDSASAVIILESYFEQGY</sequence>
<comment type="function">
    <text evidence="1">Could be a nuclease involved in processing of the 5'-end of pre-16S rRNA.</text>
</comment>
<comment type="subcellular location">
    <subcellularLocation>
        <location evidence="1">Cytoplasm</location>
    </subcellularLocation>
</comment>
<comment type="similarity">
    <text evidence="1">Belongs to the YqgF nuclease family.</text>
</comment>
<proteinExistence type="inferred from homology"/>
<accession>A9MQS7</accession>
<name>YQGF_SALAR</name>
<organism>
    <name type="scientific">Salmonella arizonae (strain ATCC BAA-731 / CDC346-86 / RSK2980)</name>
    <dbReference type="NCBI Taxonomy" id="41514"/>
    <lineage>
        <taxon>Bacteria</taxon>
        <taxon>Pseudomonadati</taxon>
        <taxon>Pseudomonadota</taxon>
        <taxon>Gammaproteobacteria</taxon>
        <taxon>Enterobacterales</taxon>
        <taxon>Enterobacteriaceae</taxon>
        <taxon>Salmonella</taxon>
    </lineage>
</organism>
<feature type="chain" id="PRO_1000082753" description="Putative pre-16S rRNA nuclease">
    <location>
        <begin position="1"/>
        <end position="138"/>
    </location>
</feature>
<evidence type="ECO:0000255" key="1">
    <source>
        <dbReference type="HAMAP-Rule" id="MF_00651"/>
    </source>
</evidence>
<protein>
    <recommendedName>
        <fullName evidence="1">Putative pre-16S rRNA nuclease</fullName>
        <ecNumber evidence="1">3.1.-.-</ecNumber>
    </recommendedName>
</protein>
<gene>
    <name evidence="1" type="primary">yqgF</name>
    <name type="ordered locus">SARI_04548</name>
</gene>